<accession>B2JI38</accession>
<comment type="subunit">
    <text evidence="1">Part of the 50S ribosomal subunit. Contacts protein L32.</text>
</comment>
<comment type="similarity">
    <text evidence="1">Belongs to the bacterial ribosomal protein bL17 family.</text>
</comment>
<evidence type="ECO:0000255" key="1">
    <source>
        <dbReference type="HAMAP-Rule" id="MF_01368"/>
    </source>
</evidence>
<evidence type="ECO:0000305" key="2"/>
<keyword id="KW-1185">Reference proteome</keyword>
<keyword id="KW-0687">Ribonucleoprotein</keyword>
<keyword id="KW-0689">Ribosomal protein</keyword>
<proteinExistence type="inferred from homology"/>
<feature type="chain" id="PRO_1000144391" description="Large ribosomal subunit protein bL17">
    <location>
        <begin position="1"/>
        <end position="131"/>
    </location>
</feature>
<organism>
    <name type="scientific">Paraburkholderia phymatum (strain DSM 17167 / CIP 108236 / LMG 21445 / STM815)</name>
    <name type="common">Burkholderia phymatum</name>
    <dbReference type="NCBI Taxonomy" id="391038"/>
    <lineage>
        <taxon>Bacteria</taxon>
        <taxon>Pseudomonadati</taxon>
        <taxon>Pseudomonadota</taxon>
        <taxon>Betaproteobacteria</taxon>
        <taxon>Burkholderiales</taxon>
        <taxon>Burkholderiaceae</taxon>
        <taxon>Paraburkholderia</taxon>
    </lineage>
</organism>
<sequence>MRHRHGLRKLNRTSSHRLAMLRNMSNSLIEHEVIKTTLPKAKELRKVVEPLITLGKKPSLANRRLAFNRLRDRDSVTKLFDVLGPRFANRPGGYLRILKFGFRVGDNAPMALVELLDRPEVEEVENVAEAE</sequence>
<name>RL17_PARP8</name>
<gene>
    <name evidence="1" type="primary">rplQ</name>
    <name type="ordered locus">Bphy_2812</name>
</gene>
<reference key="1">
    <citation type="journal article" date="2014" name="Stand. Genomic Sci.">
        <title>Complete genome sequence of Burkholderia phymatum STM815(T), a broad host range and efficient nitrogen-fixing symbiont of Mimosa species.</title>
        <authorList>
            <person name="Moulin L."/>
            <person name="Klonowska A."/>
            <person name="Caroline B."/>
            <person name="Booth K."/>
            <person name="Vriezen J.A."/>
            <person name="Melkonian R."/>
            <person name="James E.K."/>
            <person name="Young J.P."/>
            <person name="Bena G."/>
            <person name="Hauser L."/>
            <person name="Land M."/>
            <person name="Kyrpides N."/>
            <person name="Bruce D."/>
            <person name="Chain P."/>
            <person name="Copeland A."/>
            <person name="Pitluck S."/>
            <person name="Woyke T."/>
            <person name="Lizotte-Waniewski M."/>
            <person name="Bristow J."/>
            <person name="Riley M."/>
        </authorList>
    </citation>
    <scope>NUCLEOTIDE SEQUENCE [LARGE SCALE GENOMIC DNA]</scope>
    <source>
        <strain>DSM 17167 / CIP 108236 / LMG 21445 / STM815</strain>
    </source>
</reference>
<protein>
    <recommendedName>
        <fullName evidence="1">Large ribosomal subunit protein bL17</fullName>
    </recommendedName>
    <alternativeName>
        <fullName evidence="2">50S ribosomal protein L17</fullName>
    </alternativeName>
</protein>
<dbReference type="EMBL" id="CP001043">
    <property type="protein sequence ID" value="ACC71984.1"/>
    <property type="molecule type" value="Genomic_DNA"/>
</dbReference>
<dbReference type="RefSeq" id="WP_007730705.1">
    <property type="nucleotide sequence ID" value="NZ_CADFGH010000028.1"/>
</dbReference>
<dbReference type="SMR" id="B2JI38"/>
<dbReference type="STRING" id="391038.Bphy_2812"/>
<dbReference type="GeneID" id="69968047"/>
<dbReference type="KEGG" id="bph:Bphy_2812"/>
<dbReference type="eggNOG" id="COG0203">
    <property type="taxonomic scope" value="Bacteria"/>
</dbReference>
<dbReference type="HOGENOM" id="CLU_074407_2_0_4"/>
<dbReference type="OrthoDB" id="9809073at2"/>
<dbReference type="Proteomes" id="UP000001192">
    <property type="component" value="Chromosome 1"/>
</dbReference>
<dbReference type="GO" id="GO:0022625">
    <property type="term" value="C:cytosolic large ribosomal subunit"/>
    <property type="evidence" value="ECO:0007669"/>
    <property type="project" value="TreeGrafter"/>
</dbReference>
<dbReference type="GO" id="GO:0003735">
    <property type="term" value="F:structural constituent of ribosome"/>
    <property type="evidence" value="ECO:0007669"/>
    <property type="project" value="InterPro"/>
</dbReference>
<dbReference type="GO" id="GO:0006412">
    <property type="term" value="P:translation"/>
    <property type="evidence" value="ECO:0007669"/>
    <property type="project" value="UniProtKB-UniRule"/>
</dbReference>
<dbReference type="FunFam" id="3.90.1030.10:FF:000001">
    <property type="entry name" value="50S ribosomal protein L17"/>
    <property type="match status" value="1"/>
</dbReference>
<dbReference type="Gene3D" id="3.90.1030.10">
    <property type="entry name" value="Ribosomal protein L17"/>
    <property type="match status" value="1"/>
</dbReference>
<dbReference type="HAMAP" id="MF_01368">
    <property type="entry name" value="Ribosomal_bL17"/>
    <property type="match status" value="1"/>
</dbReference>
<dbReference type="InterPro" id="IPR000456">
    <property type="entry name" value="Ribosomal_bL17"/>
</dbReference>
<dbReference type="InterPro" id="IPR047859">
    <property type="entry name" value="Ribosomal_bL17_CS"/>
</dbReference>
<dbReference type="InterPro" id="IPR036373">
    <property type="entry name" value="Ribosomal_bL17_sf"/>
</dbReference>
<dbReference type="NCBIfam" id="TIGR00059">
    <property type="entry name" value="L17"/>
    <property type="match status" value="1"/>
</dbReference>
<dbReference type="PANTHER" id="PTHR14413:SF16">
    <property type="entry name" value="LARGE RIBOSOMAL SUBUNIT PROTEIN BL17M"/>
    <property type="match status" value="1"/>
</dbReference>
<dbReference type="PANTHER" id="PTHR14413">
    <property type="entry name" value="RIBOSOMAL PROTEIN L17"/>
    <property type="match status" value="1"/>
</dbReference>
<dbReference type="Pfam" id="PF01196">
    <property type="entry name" value="Ribosomal_L17"/>
    <property type="match status" value="1"/>
</dbReference>
<dbReference type="SUPFAM" id="SSF64263">
    <property type="entry name" value="Prokaryotic ribosomal protein L17"/>
    <property type="match status" value="1"/>
</dbReference>
<dbReference type="PROSITE" id="PS01167">
    <property type="entry name" value="RIBOSOMAL_L17"/>
    <property type="match status" value="1"/>
</dbReference>